<proteinExistence type="inferred from homology"/>
<keyword id="KW-0687">Ribonucleoprotein</keyword>
<keyword id="KW-0689">Ribosomal protein</keyword>
<protein>
    <recommendedName>
        <fullName evidence="1">Large ribosomal subunit protein bL17</fullName>
    </recommendedName>
    <alternativeName>
        <fullName evidence="2">50S ribosomal protein L17</fullName>
    </alternativeName>
</protein>
<feature type="chain" id="PRO_1000087169" description="Large ribosomal subunit protein bL17">
    <location>
        <begin position="1"/>
        <end position="117"/>
    </location>
</feature>
<reference key="1">
    <citation type="submission" date="2007-05" db="EMBL/GenBank/DDBJ databases">
        <title>Complete sequence of Dehalococcoides sp. BAV1.</title>
        <authorList>
            <consortium name="US DOE Joint Genome Institute"/>
            <person name="Copeland A."/>
            <person name="Lucas S."/>
            <person name="Lapidus A."/>
            <person name="Barry K."/>
            <person name="Detter J.C."/>
            <person name="Glavina del Rio T."/>
            <person name="Hammon N."/>
            <person name="Israni S."/>
            <person name="Pitluck S."/>
            <person name="Lowry S."/>
            <person name="Clum A."/>
            <person name="Schmutz J."/>
            <person name="Larimer F."/>
            <person name="Land M."/>
            <person name="Hauser L."/>
            <person name="Kyrpides N."/>
            <person name="Kim E."/>
            <person name="Ritalahti K.M."/>
            <person name="Loeffler F."/>
            <person name="Richardson P."/>
        </authorList>
    </citation>
    <scope>NUCLEOTIDE SEQUENCE [LARGE SCALE GENOMIC DNA]</scope>
    <source>
        <strain>ATCC BAA-2100 / JCM 16839 / KCTC 5957 / BAV1</strain>
    </source>
</reference>
<gene>
    <name evidence="1" type="primary">rplQ</name>
    <name type="ordered locus">DehaBAV1_0480</name>
</gene>
<evidence type="ECO:0000255" key="1">
    <source>
        <dbReference type="HAMAP-Rule" id="MF_01368"/>
    </source>
</evidence>
<evidence type="ECO:0000305" key="2"/>
<accession>A5FRV6</accession>
<name>RL17_DEHMB</name>
<comment type="subunit">
    <text evidence="1">Part of the 50S ribosomal subunit. Contacts protein L32.</text>
</comment>
<comment type="similarity">
    <text evidence="1">Belongs to the bacterial ribosomal protein bL17 family.</text>
</comment>
<dbReference type="EMBL" id="CP000688">
    <property type="protein sequence ID" value="ABQ17065.1"/>
    <property type="molecule type" value="Genomic_DNA"/>
</dbReference>
<dbReference type="SMR" id="A5FRV6"/>
<dbReference type="KEGG" id="deb:DehaBAV1_0480"/>
<dbReference type="PATRIC" id="fig|216389.18.peg.523"/>
<dbReference type="HOGENOM" id="CLU_074407_2_2_0"/>
<dbReference type="GO" id="GO:0022625">
    <property type="term" value="C:cytosolic large ribosomal subunit"/>
    <property type="evidence" value="ECO:0007669"/>
    <property type="project" value="TreeGrafter"/>
</dbReference>
<dbReference type="GO" id="GO:0003735">
    <property type="term" value="F:structural constituent of ribosome"/>
    <property type="evidence" value="ECO:0007669"/>
    <property type="project" value="InterPro"/>
</dbReference>
<dbReference type="GO" id="GO:0006412">
    <property type="term" value="P:translation"/>
    <property type="evidence" value="ECO:0007669"/>
    <property type="project" value="UniProtKB-UniRule"/>
</dbReference>
<dbReference type="Gene3D" id="3.90.1030.10">
    <property type="entry name" value="Ribosomal protein L17"/>
    <property type="match status" value="1"/>
</dbReference>
<dbReference type="HAMAP" id="MF_01368">
    <property type="entry name" value="Ribosomal_bL17"/>
    <property type="match status" value="1"/>
</dbReference>
<dbReference type="InterPro" id="IPR000456">
    <property type="entry name" value="Ribosomal_bL17"/>
</dbReference>
<dbReference type="InterPro" id="IPR036373">
    <property type="entry name" value="Ribosomal_bL17_sf"/>
</dbReference>
<dbReference type="NCBIfam" id="TIGR00059">
    <property type="entry name" value="L17"/>
    <property type="match status" value="1"/>
</dbReference>
<dbReference type="PANTHER" id="PTHR14413:SF16">
    <property type="entry name" value="LARGE RIBOSOMAL SUBUNIT PROTEIN BL17M"/>
    <property type="match status" value="1"/>
</dbReference>
<dbReference type="PANTHER" id="PTHR14413">
    <property type="entry name" value="RIBOSOMAL PROTEIN L17"/>
    <property type="match status" value="1"/>
</dbReference>
<dbReference type="Pfam" id="PF01196">
    <property type="entry name" value="Ribosomal_L17"/>
    <property type="match status" value="1"/>
</dbReference>
<dbReference type="SUPFAM" id="SSF64263">
    <property type="entry name" value="Prokaryotic ribosomal protein L17"/>
    <property type="match status" value="1"/>
</dbReference>
<organism>
    <name type="scientific">Dehalococcoides mccartyi (strain ATCC BAA-2100 / JCM 16839 / KCTC 5957 / BAV1)</name>
    <dbReference type="NCBI Taxonomy" id="216389"/>
    <lineage>
        <taxon>Bacteria</taxon>
        <taxon>Bacillati</taxon>
        <taxon>Chloroflexota</taxon>
        <taxon>Dehalococcoidia</taxon>
        <taxon>Dehalococcoidales</taxon>
        <taxon>Dehalococcoidaceae</taxon>
        <taxon>Dehalococcoides</taxon>
    </lineage>
</organism>
<sequence length="117" mass="13494">MRHKVSGRRFDRPTGQRMSLYRNLVTDLLNYEEITISEPRAKEIRSMAEKMITLGKKGTLASRRRALAFVYMPGIVEKVFEDLSKRYAERPGGYTRMTKLGPRQGDGAEMVKLELIK</sequence>